<proteinExistence type="evidence at protein level"/>
<sequence length="426" mass="48777">MSHQNQLIPQAYISNFHNRLTNEDDGIPIFTMAQQTRQHKRAKVVNYAEYDNDLFDEFNMNGSNFNNADTHYKDNAVSHENTPALTNGVTMDGSEYNVLENMNGADSIISNNKYDAGSNMVVESLSGLNSNNNASNGPSNKAQAQDIGNAVLPDLQDQHHNPFNILRYPKIRDTFINGKVVSPYRLNTDQETKANANSGEAIMIPITLDIEHMGHTIKDQFLWNYNDDSISPEEFASIYCKDLDMTSATLQTQIANIIKEQLKDLENIAATEIMSDLHVIINLTCNLQDRFFEDNFQWNLNDKSLTPERFATSIVQDLGLTREFIPLISQSLHETILKIKKDWVDGHLIQDHVPNDAAFGYLSGIRLDIDELGSNWCPRVEILTKEEIQKREIEKERNLRRLKRETDRLSRRGRRRLDDLETTMRM</sequence>
<feature type="chain" id="PRO_0000205962" description="Chromatin structure-remodeling complex subunit SFH1">
    <location>
        <begin position="1"/>
        <end position="426"/>
    </location>
</feature>
<feature type="region of interest" description="Interaction with STH1" evidence="8">
    <location>
        <begin position="201"/>
        <end position="242"/>
    </location>
</feature>
<feature type="modified residue" description="Phosphoserine" evidence="10">
    <location>
        <position position="78"/>
    </location>
</feature>
<feature type="helix" evidence="12">
    <location>
        <begin position="4"/>
        <end position="6"/>
    </location>
</feature>
<feature type="helix" evidence="12">
    <location>
        <begin position="16"/>
        <end position="21"/>
    </location>
</feature>
<feature type="strand" evidence="12">
    <location>
        <begin position="23"/>
        <end position="25"/>
    </location>
</feature>
<feature type="strand" evidence="12">
    <location>
        <begin position="28"/>
        <end position="30"/>
    </location>
</feature>
<feature type="strand" evidence="11">
    <location>
        <begin position="154"/>
        <end position="156"/>
    </location>
</feature>
<feature type="helix" evidence="12">
    <location>
        <begin position="162"/>
        <end position="167"/>
    </location>
</feature>
<feature type="helix" evidence="12">
    <location>
        <begin position="169"/>
        <end position="176"/>
    </location>
</feature>
<feature type="strand" evidence="12">
    <location>
        <begin position="203"/>
        <end position="212"/>
    </location>
</feature>
<feature type="strand" evidence="12">
    <location>
        <begin position="215"/>
        <end position="224"/>
    </location>
</feature>
<feature type="helix" evidence="12">
    <location>
        <begin position="232"/>
        <end position="243"/>
    </location>
</feature>
<feature type="helix" evidence="12">
    <location>
        <begin position="248"/>
        <end position="264"/>
    </location>
</feature>
<feature type="helix" evidence="12">
    <location>
        <begin position="266"/>
        <end position="269"/>
    </location>
</feature>
<feature type="strand" evidence="12">
    <location>
        <begin position="278"/>
        <end position="301"/>
    </location>
</feature>
<feature type="helix" evidence="12">
    <location>
        <begin position="307"/>
        <end position="318"/>
    </location>
</feature>
<feature type="helix" evidence="12">
    <location>
        <begin position="324"/>
        <end position="344"/>
    </location>
</feature>
<feature type="strand" evidence="11">
    <location>
        <begin position="358"/>
        <end position="362"/>
    </location>
</feature>
<feature type="strand" evidence="12">
    <location>
        <begin position="379"/>
        <end position="382"/>
    </location>
</feature>
<name>SFH1_YEAST</name>
<gene>
    <name type="primary">SFH1</name>
    <name type="ordered locus">YLR321C</name>
    <name type="ORF">L8543.4</name>
</gene>
<accession>Q06168</accession>
<accession>D6VYW4</accession>
<organism>
    <name type="scientific">Saccharomyces cerevisiae (strain ATCC 204508 / S288c)</name>
    <name type="common">Baker's yeast</name>
    <dbReference type="NCBI Taxonomy" id="559292"/>
    <lineage>
        <taxon>Eukaryota</taxon>
        <taxon>Fungi</taxon>
        <taxon>Dikarya</taxon>
        <taxon>Ascomycota</taxon>
        <taxon>Saccharomycotina</taxon>
        <taxon>Saccharomycetes</taxon>
        <taxon>Saccharomycetales</taxon>
        <taxon>Saccharomycetaceae</taxon>
        <taxon>Saccharomyces</taxon>
    </lineage>
</organism>
<keyword id="KW-0002">3D-structure</keyword>
<keyword id="KW-0131">Cell cycle</keyword>
<keyword id="KW-0156">Chromatin regulator</keyword>
<keyword id="KW-0539">Nucleus</keyword>
<keyword id="KW-0597">Phosphoprotein</keyword>
<keyword id="KW-1185">Reference proteome</keyword>
<keyword id="KW-0804">Transcription</keyword>
<keyword id="KW-0805">Transcription regulation</keyword>
<evidence type="ECO:0000269" key="1">
    <source>
    </source>
</evidence>
<evidence type="ECO:0000269" key="2">
    <source>
    </source>
</evidence>
<evidence type="ECO:0000269" key="3">
    <source>
    </source>
</evidence>
<evidence type="ECO:0000269" key="4">
    <source>
    </source>
</evidence>
<evidence type="ECO:0000269" key="5">
    <source>
    </source>
</evidence>
<evidence type="ECO:0000269" key="6">
    <source>
    </source>
</evidence>
<evidence type="ECO:0000269" key="7">
    <source>
    </source>
</evidence>
<evidence type="ECO:0000269" key="8">
    <source>
    </source>
</evidence>
<evidence type="ECO:0000305" key="9"/>
<evidence type="ECO:0007744" key="10">
    <source>
    </source>
</evidence>
<evidence type="ECO:0007829" key="11">
    <source>
        <dbReference type="PDB" id="6K15"/>
    </source>
</evidence>
<evidence type="ECO:0007829" key="12">
    <source>
        <dbReference type="PDB" id="6V8O"/>
    </source>
</evidence>
<dbReference type="EMBL" id="U20618">
    <property type="protein sequence ID" value="AAB64513.1"/>
    <property type="molecule type" value="Genomic_DNA"/>
</dbReference>
<dbReference type="EMBL" id="BK006945">
    <property type="protein sequence ID" value="DAA09630.1"/>
    <property type="molecule type" value="Genomic_DNA"/>
</dbReference>
<dbReference type="PIR" id="S53399">
    <property type="entry name" value="S53399"/>
</dbReference>
<dbReference type="RefSeq" id="NP_013425.1">
    <property type="nucleotide sequence ID" value="NM_001182210.1"/>
</dbReference>
<dbReference type="PDB" id="6K15">
    <property type="method" value="EM"/>
    <property type="resolution" value="3.40 A"/>
    <property type="chains" value="G=1-426"/>
</dbReference>
<dbReference type="PDB" id="6KW3">
    <property type="method" value="EM"/>
    <property type="resolution" value="7.13 A"/>
    <property type="chains" value="G=1-426"/>
</dbReference>
<dbReference type="PDB" id="6KW4">
    <property type="method" value="EM"/>
    <property type="resolution" value="7.55 A"/>
    <property type="chains" value="G=1-426"/>
</dbReference>
<dbReference type="PDB" id="6KW5">
    <property type="method" value="EM"/>
    <property type="resolution" value="10.13 A"/>
    <property type="chains" value="G=1-426"/>
</dbReference>
<dbReference type="PDB" id="6TDA">
    <property type="method" value="EM"/>
    <property type="resolution" value="15.00 A"/>
    <property type="chains" value="K=1-426"/>
</dbReference>
<dbReference type="PDB" id="6V8O">
    <property type="method" value="EM"/>
    <property type="resolution" value="3.07 A"/>
    <property type="chains" value="Q=1-426"/>
</dbReference>
<dbReference type="PDB" id="6V92">
    <property type="method" value="EM"/>
    <property type="resolution" value="20.00 A"/>
    <property type="chains" value="Q=1-426"/>
</dbReference>
<dbReference type="PDBsum" id="6K15"/>
<dbReference type="PDBsum" id="6KW3"/>
<dbReference type="PDBsum" id="6KW4"/>
<dbReference type="PDBsum" id="6KW5"/>
<dbReference type="PDBsum" id="6TDA"/>
<dbReference type="PDBsum" id="6V8O"/>
<dbReference type="PDBsum" id="6V92"/>
<dbReference type="EMDB" id="EMD-0777"/>
<dbReference type="EMDB" id="EMD-0778"/>
<dbReference type="EMDB" id="EMD-0779"/>
<dbReference type="EMDB" id="EMD-10465"/>
<dbReference type="EMDB" id="EMD-21107"/>
<dbReference type="EMDB" id="EMD-21114"/>
<dbReference type="EMDB" id="EMD-9905"/>
<dbReference type="SMR" id="Q06168"/>
<dbReference type="BioGRID" id="31585">
    <property type="interactions" value="158"/>
</dbReference>
<dbReference type="ComplexPortal" id="CPX-1888">
    <property type="entry name" value="RSC chromatin remodelling complex, variant RSC2"/>
</dbReference>
<dbReference type="ComplexPortal" id="CPX-1889">
    <property type="entry name" value="RSC chromatin remodelling complex, variant RSC1"/>
</dbReference>
<dbReference type="DIP" id="DIP-1898N"/>
<dbReference type="FunCoup" id="Q06168">
    <property type="interactions" value="298"/>
</dbReference>
<dbReference type="IntAct" id="Q06168">
    <property type="interactions" value="52"/>
</dbReference>
<dbReference type="MINT" id="Q06168"/>
<dbReference type="STRING" id="4932.YLR321C"/>
<dbReference type="iPTMnet" id="Q06168"/>
<dbReference type="PaxDb" id="4932-YLR321C"/>
<dbReference type="PeptideAtlas" id="Q06168"/>
<dbReference type="EnsemblFungi" id="YLR321C_mRNA">
    <property type="protein sequence ID" value="YLR321C"/>
    <property type="gene ID" value="YLR321C"/>
</dbReference>
<dbReference type="GeneID" id="851032"/>
<dbReference type="KEGG" id="sce:YLR321C"/>
<dbReference type="AGR" id="SGD:S000004313"/>
<dbReference type="SGD" id="S000004313">
    <property type="gene designation" value="SFH1"/>
</dbReference>
<dbReference type="VEuPathDB" id="FungiDB:YLR321C"/>
<dbReference type="eggNOG" id="KOG1649">
    <property type="taxonomic scope" value="Eukaryota"/>
</dbReference>
<dbReference type="GeneTree" id="ENSGT00440000038585"/>
<dbReference type="HOGENOM" id="CLU_014421_4_0_1"/>
<dbReference type="InParanoid" id="Q06168"/>
<dbReference type="OMA" id="NFHNRIR"/>
<dbReference type="OrthoDB" id="10258327at2759"/>
<dbReference type="BioCyc" id="YEAST:G3O-32405-MONOMER"/>
<dbReference type="BioGRID-ORCS" id="851032">
    <property type="hits" value="0 hits in 10 CRISPR screens"/>
</dbReference>
<dbReference type="PRO" id="PR:Q06168"/>
<dbReference type="Proteomes" id="UP000002311">
    <property type="component" value="Chromosome XII"/>
</dbReference>
<dbReference type="RNAct" id="Q06168">
    <property type="molecule type" value="protein"/>
</dbReference>
<dbReference type="GO" id="GO:0000785">
    <property type="term" value="C:chromatin"/>
    <property type="evidence" value="ECO:0000303"/>
    <property type="project" value="ComplexPortal"/>
</dbReference>
<dbReference type="GO" id="GO:0000228">
    <property type="term" value="C:nuclear chromosome"/>
    <property type="evidence" value="ECO:0007669"/>
    <property type="project" value="InterPro"/>
</dbReference>
<dbReference type="GO" id="GO:0005634">
    <property type="term" value="C:nucleus"/>
    <property type="evidence" value="ECO:0000318"/>
    <property type="project" value="GO_Central"/>
</dbReference>
<dbReference type="GO" id="GO:0016586">
    <property type="term" value="C:RSC-type complex"/>
    <property type="evidence" value="ECO:0000314"/>
    <property type="project" value="UniProtKB"/>
</dbReference>
<dbReference type="GO" id="GO:0031491">
    <property type="term" value="F:nucleosome binding"/>
    <property type="evidence" value="ECO:0000314"/>
    <property type="project" value="SGD"/>
</dbReference>
<dbReference type="GO" id="GO:0003712">
    <property type="term" value="F:transcription coregulator activity"/>
    <property type="evidence" value="ECO:0000318"/>
    <property type="project" value="GO_Central"/>
</dbReference>
<dbReference type="GO" id="GO:0006338">
    <property type="term" value="P:chromatin remodeling"/>
    <property type="evidence" value="ECO:0000314"/>
    <property type="project" value="UniProtKB"/>
</dbReference>
<dbReference type="GO" id="GO:0031055">
    <property type="term" value="P:chromatin remodeling at centromere"/>
    <property type="evidence" value="ECO:0000315"/>
    <property type="project" value="SGD"/>
</dbReference>
<dbReference type="GO" id="GO:0007059">
    <property type="term" value="P:chromosome segregation"/>
    <property type="evidence" value="ECO:0000316"/>
    <property type="project" value="SGD"/>
</dbReference>
<dbReference type="GO" id="GO:0006302">
    <property type="term" value="P:double-strand break repair"/>
    <property type="evidence" value="ECO:0000315"/>
    <property type="project" value="SGD"/>
</dbReference>
<dbReference type="GO" id="GO:0000086">
    <property type="term" value="P:G2/M transition of mitotic cell cycle"/>
    <property type="evidence" value="ECO:0000315"/>
    <property type="project" value="UniProtKB"/>
</dbReference>
<dbReference type="GO" id="GO:0006337">
    <property type="term" value="P:nucleosome disassembly"/>
    <property type="evidence" value="ECO:0000314"/>
    <property type="project" value="SGD"/>
</dbReference>
<dbReference type="GO" id="GO:0033262">
    <property type="term" value="P:regulation of nuclear cell cycle DNA replication"/>
    <property type="evidence" value="ECO:0000316"/>
    <property type="project" value="SGD"/>
</dbReference>
<dbReference type="GO" id="GO:0006357">
    <property type="term" value="P:regulation of transcription by RNA polymerase II"/>
    <property type="evidence" value="ECO:0000318"/>
    <property type="project" value="GO_Central"/>
</dbReference>
<dbReference type="GO" id="GO:0006368">
    <property type="term" value="P:transcription elongation by RNA polymerase II"/>
    <property type="evidence" value="ECO:0000314"/>
    <property type="project" value="SGD"/>
</dbReference>
<dbReference type="InterPro" id="IPR017393">
    <property type="entry name" value="Sfh1/SNF5"/>
</dbReference>
<dbReference type="InterPro" id="IPR006939">
    <property type="entry name" value="SNF5"/>
</dbReference>
<dbReference type="PANTHER" id="PTHR10019">
    <property type="entry name" value="SNF5"/>
    <property type="match status" value="1"/>
</dbReference>
<dbReference type="Pfam" id="PF04855">
    <property type="entry name" value="SNF5"/>
    <property type="match status" value="1"/>
</dbReference>
<dbReference type="PIRSF" id="PIRSF038126">
    <property type="entry name" value="SWI_SNF"/>
    <property type="match status" value="1"/>
</dbReference>
<comment type="function">
    <text evidence="1 2 3 4 5 7 8">Component of the chromatin structure-remodeling complex (RSC), which is involved in transcription regulation and nucleosome positioning. RSC is responsible for the transfer of a histone octamer from a nucleosome core particle to naked DNA. The reaction requires ATP and involves an activated RSC-nucleosome intermediate. Remodeling reaction also involves DNA translocation, DNA twist and conformational change. As a reconfigurer of centromeric and flanking nucleosomes, RSC complex is required both for proper kinetochore function in chromosome segregation and, via a PKC1-dependent signaling pathway, for organization of the cellular cytoskeleton. This subunit is essential for mitotic growth and required for cell cycle progression.</text>
</comment>
<comment type="subunit">
    <text evidence="5 8">Interacts directly with STH1. Component of the two forms of the RSC complex composed of at least either RSC1 or RSC2, and ARP7, ARP9, LDB7, NPL6, RSC3, RSC30, RSC4, RSC58, RSC6, RSC8, RSC9, SFH1, STH1, HTL1 and probably RTT102. The complexes interact with histone and histone variant components of centromeric chromatin.</text>
</comment>
<comment type="subcellular location">
    <subcellularLocation>
        <location evidence="5">Nucleus</location>
    </subcellularLocation>
    <text>Localizes to centromeric and flanking chromatin. Association with these loci is dependent on STH1.</text>
</comment>
<comment type="PTM">
    <text evidence="8">Phosphorylated in the G1 phase.</text>
</comment>
<comment type="miscellaneous">
    <text evidence="6">Present with 3940 molecules/cell in log phase SD medium.</text>
</comment>
<comment type="similarity">
    <text evidence="9">Belongs to the SNF5 family.</text>
</comment>
<reference evidence="9" key="1">
    <citation type="journal article" date="1997" name="Nature">
        <title>The nucleotide sequence of Saccharomyces cerevisiae chromosome XII.</title>
        <authorList>
            <person name="Johnston M."/>
            <person name="Hillier L.W."/>
            <person name="Riles L."/>
            <person name="Albermann K."/>
            <person name="Andre B."/>
            <person name="Ansorge W."/>
            <person name="Benes V."/>
            <person name="Brueckner M."/>
            <person name="Delius H."/>
            <person name="Dubois E."/>
            <person name="Duesterhoeft A."/>
            <person name="Entian K.-D."/>
            <person name="Floeth M."/>
            <person name="Goffeau A."/>
            <person name="Hebling U."/>
            <person name="Heumann K."/>
            <person name="Heuss-Neitzel D."/>
            <person name="Hilbert H."/>
            <person name="Hilger F."/>
            <person name="Kleine K."/>
            <person name="Koetter P."/>
            <person name="Louis E.J."/>
            <person name="Messenguy F."/>
            <person name="Mewes H.-W."/>
            <person name="Miosga T."/>
            <person name="Moestl D."/>
            <person name="Mueller-Auer S."/>
            <person name="Nentwich U."/>
            <person name="Obermaier B."/>
            <person name="Piravandi E."/>
            <person name="Pohl T.M."/>
            <person name="Portetelle D."/>
            <person name="Purnelle B."/>
            <person name="Rechmann S."/>
            <person name="Rieger M."/>
            <person name="Rinke M."/>
            <person name="Rose M."/>
            <person name="Scharfe M."/>
            <person name="Scherens B."/>
            <person name="Scholler P."/>
            <person name="Schwager C."/>
            <person name="Schwarz S."/>
            <person name="Underwood A.P."/>
            <person name="Urrestarazu L.A."/>
            <person name="Vandenbol M."/>
            <person name="Verhasselt P."/>
            <person name="Vierendeels F."/>
            <person name="Voet M."/>
            <person name="Volckaert G."/>
            <person name="Voss H."/>
            <person name="Wambutt R."/>
            <person name="Wedler E."/>
            <person name="Wedler H."/>
            <person name="Zimmermann F.K."/>
            <person name="Zollner A."/>
            <person name="Hani J."/>
            <person name="Hoheisel J.D."/>
        </authorList>
    </citation>
    <scope>NUCLEOTIDE SEQUENCE [LARGE SCALE GENOMIC DNA]</scope>
    <source>
        <strain>ATCC 204508 / S288c</strain>
    </source>
</reference>
<reference key="2">
    <citation type="journal article" date="2014" name="G3 (Bethesda)">
        <title>The reference genome sequence of Saccharomyces cerevisiae: Then and now.</title>
        <authorList>
            <person name="Engel S.R."/>
            <person name="Dietrich F.S."/>
            <person name="Fisk D.G."/>
            <person name="Binkley G."/>
            <person name="Balakrishnan R."/>
            <person name="Costanzo M.C."/>
            <person name="Dwight S.S."/>
            <person name="Hitz B.C."/>
            <person name="Karra K."/>
            <person name="Nash R.S."/>
            <person name="Weng S."/>
            <person name="Wong E.D."/>
            <person name="Lloyd P."/>
            <person name="Skrzypek M.S."/>
            <person name="Miyasato S.R."/>
            <person name="Simison M."/>
            <person name="Cherry J.M."/>
        </authorList>
    </citation>
    <scope>GENOME REANNOTATION</scope>
    <source>
        <strain>ATCC 204508 / S288c</strain>
    </source>
</reference>
<reference evidence="9" key="3">
    <citation type="journal article" date="1996" name="Cell">
        <title>RSC, an essential, abundant chromatin-remodeling complex.</title>
        <authorList>
            <person name="Cairns B.R."/>
            <person name="Lorch Y."/>
            <person name="Li Y."/>
            <person name="Zhang M."/>
            <person name="Lacomis L."/>
            <person name="Erdjument-Bromage H."/>
            <person name="Tempst P."/>
            <person name="Du J."/>
            <person name="Laurent B.C."/>
            <person name="Kornberg R.D."/>
        </authorList>
    </citation>
    <scope>FUNCTION OF THE RSC COMPLEX</scope>
</reference>
<reference evidence="9" key="4">
    <citation type="journal article" date="1997" name="Mol. Cell. Biol.">
        <title>Sfh1p, a component of a novel chromatin-remodeling complex, is required for cell cycle progression.</title>
        <authorList>
            <person name="Cao Y."/>
            <person name="Cairns B.R."/>
            <person name="Kornberg R.D."/>
            <person name="Laurent B.C."/>
        </authorList>
    </citation>
    <scope>FUNCTION</scope>
    <scope>IDENTIFICATION IN THE RSC COMPLEX</scope>
    <scope>INTERACTION WITH STH1</scope>
    <scope>PHOSPHORYLATION</scope>
</reference>
<reference evidence="9" key="5">
    <citation type="journal article" date="1999" name="Cell">
        <title>Histone octamer transfer by a chromatin-remodeling complex.</title>
        <authorList>
            <person name="Lorch Y."/>
            <person name="Zhang M."/>
            <person name="Kornberg R.D."/>
        </authorList>
    </citation>
    <scope>FUNCTION OF THE RSC COMPLEX</scope>
</reference>
<reference evidence="9" key="6">
    <citation type="journal article" date="1999" name="EMBO J.">
        <title>Transcriptional repression of the yeast CHA1 gene requires the chromatin-remodeling complex RSC.</title>
        <authorList>
            <person name="Moreira J.M.A."/>
            <person name="Holmberg S."/>
        </authorList>
    </citation>
    <scope>FUNCTION OF THE RSC COMPLEX</scope>
</reference>
<reference evidence="9" key="7">
    <citation type="journal article" date="1999" name="Mol. Cell">
        <title>Two functionally distinct forms of the RSC nucleosome-remodeling complex, containing essential AT hook, BAH, and bromodomains.</title>
        <authorList>
            <person name="Cairns B.R."/>
            <person name="Schlichter A."/>
            <person name="Erdjument-Bromage H."/>
            <person name="Tempst P."/>
            <person name="Kornberg R.D."/>
            <person name="Winston F."/>
        </authorList>
    </citation>
    <scope>COMPOSITION OF THE RSC COMPLEX</scope>
</reference>
<reference evidence="9" key="8">
    <citation type="journal article" date="2002" name="Genes Dev.">
        <title>Chromatin remodeling by RSC involves ATP-dependent DNA translocation.</title>
        <authorList>
            <person name="Saha A."/>
            <person name="Wittmeyer J."/>
            <person name="Cairns B.R."/>
        </authorList>
    </citation>
    <scope>FUNCTION OF THE RSC COMPLEX</scope>
</reference>
<reference evidence="9" key="9">
    <citation type="journal article" date="2002" name="Genetics">
        <title>Yeast RSC function is required for organization of the cellular cytoskeleton via an alternative PKC1 pathway.</title>
        <authorList>
            <person name="Chai B."/>
            <person name="Hsu J.-M."/>
            <person name="Du J."/>
            <person name="Laurent B.C."/>
        </authorList>
    </citation>
    <scope>FUNCTION OF THE RSC COMPLEX</scope>
</reference>
<reference evidence="9" key="10">
    <citation type="journal article" date="2003" name="Mol. Cell. Biol.">
        <title>The yeast RSC chromatin-remodeling complex is required for kinetochore function in chromosome segregation.</title>
        <authorList>
            <person name="Hsu J.-M."/>
            <person name="Huang J."/>
            <person name="Meluh P.B."/>
            <person name="Laurent B.C."/>
        </authorList>
    </citation>
    <scope>FUNCTION OF THE RSC COMPLEX</scope>
    <scope>SUBCELLULAR LOCATION</scope>
    <scope>INTERACTION OF THE RSC COMPLEX WITH HISTONES</scope>
</reference>
<reference key="11">
    <citation type="journal article" date="2003" name="Nature">
        <title>Global analysis of protein expression in yeast.</title>
        <authorList>
            <person name="Ghaemmaghami S."/>
            <person name="Huh W.-K."/>
            <person name="Bower K."/>
            <person name="Howson R.W."/>
            <person name="Belle A."/>
            <person name="Dephoure N."/>
            <person name="O'Shea E.K."/>
            <person name="Weissman J.S."/>
        </authorList>
    </citation>
    <scope>LEVEL OF PROTEIN EXPRESSION [LARGE SCALE ANALYSIS]</scope>
</reference>
<reference key="12">
    <citation type="journal article" date="2008" name="Mol. Cell. Proteomics">
        <title>A multidimensional chromatography technology for in-depth phosphoproteome analysis.</title>
        <authorList>
            <person name="Albuquerque C.P."/>
            <person name="Smolka M.B."/>
            <person name="Payne S.H."/>
            <person name="Bafna V."/>
            <person name="Eng J."/>
            <person name="Zhou H."/>
        </authorList>
    </citation>
    <scope>PHOSPHORYLATION [LARGE SCALE ANALYSIS] AT SER-78</scope>
    <scope>IDENTIFICATION BY MASS SPECTROMETRY [LARGE SCALE ANALYSIS]</scope>
</reference>
<protein>
    <recommendedName>
        <fullName>Chromatin structure-remodeling complex subunit SFH1</fullName>
    </recommendedName>
    <alternativeName>
        <fullName>RSC complex subunit SFH1</fullName>
    </alternativeName>
    <alternativeName>
        <fullName>SNF5 homolog 1</fullName>
    </alternativeName>
</protein>